<accession>Q9LY77</accession>
<accession>Q8GZ18</accession>
<gene>
    <name type="primary">ACA12</name>
    <name type="ordered locus">At3g63380</name>
    <name type="ORF">MAA21_10</name>
</gene>
<name>ACA12_ARATH</name>
<reference key="1">
    <citation type="journal article" date="2000" name="Nature">
        <title>Sequence and analysis of chromosome 3 of the plant Arabidopsis thaliana.</title>
        <authorList>
            <person name="Salanoubat M."/>
            <person name="Lemcke K."/>
            <person name="Rieger M."/>
            <person name="Ansorge W."/>
            <person name="Unseld M."/>
            <person name="Fartmann B."/>
            <person name="Valle G."/>
            <person name="Bloecker H."/>
            <person name="Perez-Alonso M."/>
            <person name="Obermaier B."/>
            <person name="Delseny M."/>
            <person name="Boutry M."/>
            <person name="Grivell L.A."/>
            <person name="Mache R."/>
            <person name="Puigdomenech P."/>
            <person name="De Simone V."/>
            <person name="Choisne N."/>
            <person name="Artiguenave F."/>
            <person name="Robert C."/>
            <person name="Brottier P."/>
            <person name="Wincker P."/>
            <person name="Cattolico L."/>
            <person name="Weissenbach J."/>
            <person name="Saurin W."/>
            <person name="Quetier F."/>
            <person name="Schaefer M."/>
            <person name="Mueller-Auer S."/>
            <person name="Gabel C."/>
            <person name="Fuchs M."/>
            <person name="Benes V."/>
            <person name="Wurmbach E."/>
            <person name="Drzonek H."/>
            <person name="Erfle H."/>
            <person name="Jordan N."/>
            <person name="Bangert S."/>
            <person name="Wiedelmann R."/>
            <person name="Kranz H."/>
            <person name="Voss H."/>
            <person name="Holland R."/>
            <person name="Brandt P."/>
            <person name="Nyakatura G."/>
            <person name="Vezzi A."/>
            <person name="D'Angelo M."/>
            <person name="Pallavicini A."/>
            <person name="Toppo S."/>
            <person name="Simionati B."/>
            <person name="Conrad A."/>
            <person name="Hornischer K."/>
            <person name="Kauer G."/>
            <person name="Loehnert T.-H."/>
            <person name="Nordsiek G."/>
            <person name="Reichelt J."/>
            <person name="Scharfe M."/>
            <person name="Schoen O."/>
            <person name="Bargues M."/>
            <person name="Terol J."/>
            <person name="Climent J."/>
            <person name="Navarro P."/>
            <person name="Collado C."/>
            <person name="Perez-Perez A."/>
            <person name="Ottenwaelder B."/>
            <person name="Duchemin D."/>
            <person name="Cooke R."/>
            <person name="Laudie M."/>
            <person name="Berger-Llauro C."/>
            <person name="Purnelle B."/>
            <person name="Masuy D."/>
            <person name="de Haan M."/>
            <person name="Maarse A.C."/>
            <person name="Alcaraz J.-P."/>
            <person name="Cottet A."/>
            <person name="Casacuberta E."/>
            <person name="Monfort A."/>
            <person name="Argiriou A."/>
            <person name="Flores M."/>
            <person name="Liguori R."/>
            <person name="Vitale D."/>
            <person name="Mannhaupt G."/>
            <person name="Haase D."/>
            <person name="Schoof H."/>
            <person name="Rudd S."/>
            <person name="Zaccaria P."/>
            <person name="Mewes H.-W."/>
            <person name="Mayer K.F.X."/>
            <person name="Kaul S."/>
            <person name="Town C.D."/>
            <person name="Koo H.L."/>
            <person name="Tallon L.J."/>
            <person name="Jenkins J."/>
            <person name="Rooney T."/>
            <person name="Rizzo M."/>
            <person name="Walts A."/>
            <person name="Utterback T."/>
            <person name="Fujii C.Y."/>
            <person name="Shea T.P."/>
            <person name="Creasy T.H."/>
            <person name="Haas B."/>
            <person name="Maiti R."/>
            <person name="Wu D."/>
            <person name="Peterson J."/>
            <person name="Van Aken S."/>
            <person name="Pai G."/>
            <person name="Militscher J."/>
            <person name="Sellers P."/>
            <person name="Gill J.E."/>
            <person name="Feldblyum T.V."/>
            <person name="Preuss D."/>
            <person name="Lin X."/>
            <person name="Nierman W.C."/>
            <person name="Salzberg S.L."/>
            <person name="White O."/>
            <person name="Venter J.C."/>
            <person name="Fraser C.M."/>
            <person name="Kaneko T."/>
            <person name="Nakamura Y."/>
            <person name="Sato S."/>
            <person name="Kato T."/>
            <person name="Asamizu E."/>
            <person name="Sasamoto S."/>
            <person name="Kimura T."/>
            <person name="Idesawa K."/>
            <person name="Kawashima K."/>
            <person name="Kishida Y."/>
            <person name="Kiyokawa C."/>
            <person name="Kohara M."/>
            <person name="Matsumoto M."/>
            <person name="Matsuno A."/>
            <person name="Muraki A."/>
            <person name="Nakayama S."/>
            <person name="Nakazaki N."/>
            <person name="Shinpo S."/>
            <person name="Takeuchi C."/>
            <person name="Wada T."/>
            <person name="Watanabe A."/>
            <person name="Yamada M."/>
            <person name="Yasuda M."/>
            <person name="Tabata S."/>
        </authorList>
    </citation>
    <scope>NUCLEOTIDE SEQUENCE [LARGE SCALE GENOMIC DNA]</scope>
    <source>
        <strain>cv. Columbia</strain>
    </source>
</reference>
<reference key="2">
    <citation type="journal article" date="2017" name="Plant J.">
        <title>Araport11: a complete reannotation of the Arabidopsis thaliana reference genome.</title>
        <authorList>
            <person name="Cheng C.Y."/>
            <person name="Krishnakumar V."/>
            <person name="Chan A.P."/>
            <person name="Thibaud-Nissen F."/>
            <person name="Schobel S."/>
            <person name="Town C.D."/>
        </authorList>
    </citation>
    <scope>GENOME REANNOTATION</scope>
    <source>
        <strain>cv. Columbia</strain>
    </source>
</reference>
<reference key="3">
    <citation type="journal article" date="2002" name="Science">
        <title>Functional annotation of a full-length Arabidopsis cDNA collection.</title>
        <authorList>
            <person name="Seki M."/>
            <person name="Narusaka M."/>
            <person name="Kamiya A."/>
            <person name="Ishida J."/>
            <person name="Satou M."/>
            <person name="Sakurai T."/>
            <person name="Nakajima M."/>
            <person name="Enju A."/>
            <person name="Akiyama K."/>
            <person name="Oono Y."/>
            <person name="Muramatsu M."/>
            <person name="Hayashizaki Y."/>
            <person name="Kawai J."/>
            <person name="Carninci P."/>
            <person name="Itoh M."/>
            <person name="Ishii Y."/>
            <person name="Arakawa T."/>
            <person name="Shibata K."/>
            <person name="Shinagawa A."/>
            <person name="Shinozaki K."/>
        </authorList>
    </citation>
    <scope>NUCLEOTIDE SEQUENCE [LARGE SCALE MRNA]</scope>
    <source>
        <strain>cv. Columbia</strain>
    </source>
</reference>
<reference key="4">
    <citation type="journal article" date="2003" name="Science">
        <title>Empirical analysis of transcriptional activity in the Arabidopsis genome.</title>
        <authorList>
            <person name="Yamada K."/>
            <person name="Lim J."/>
            <person name="Dale J.M."/>
            <person name="Chen H."/>
            <person name="Shinn P."/>
            <person name="Palm C.J."/>
            <person name="Southwick A.M."/>
            <person name="Wu H.C."/>
            <person name="Kim C.J."/>
            <person name="Nguyen M."/>
            <person name="Pham P.K."/>
            <person name="Cheuk R.F."/>
            <person name="Karlin-Newmann G."/>
            <person name="Liu S.X."/>
            <person name="Lam B."/>
            <person name="Sakano H."/>
            <person name="Wu T."/>
            <person name="Yu G."/>
            <person name="Miranda M."/>
            <person name="Quach H.L."/>
            <person name="Tripp M."/>
            <person name="Chang C.H."/>
            <person name="Lee J.M."/>
            <person name="Toriumi M.J."/>
            <person name="Chan M.M."/>
            <person name="Tang C.C."/>
            <person name="Onodera C.S."/>
            <person name="Deng J.M."/>
            <person name="Akiyama K."/>
            <person name="Ansari Y."/>
            <person name="Arakawa T."/>
            <person name="Banh J."/>
            <person name="Banno F."/>
            <person name="Bowser L."/>
            <person name="Brooks S.Y."/>
            <person name="Carninci P."/>
            <person name="Chao Q."/>
            <person name="Choy N."/>
            <person name="Enju A."/>
            <person name="Goldsmith A.D."/>
            <person name="Gurjal M."/>
            <person name="Hansen N.F."/>
            <person name="Hayashizaki Y."/>
            <person name="Johnson-Hopson C."/>
            <person name="Hsuan V.W."/>
            <person name="Iida K."/>
            <person name="Karnes M."/>
            <person name="Khan S."/>
            <person name="Koesema E."/>
            <person name="Ishida J."/>
            <person name="Jiang P.X."/>
            <person name="Jones T."/>
            <person name="Kawai J."/>
            <person name="Kamiya A."/>
            <person name="Meyers C."/>
            <person name="Nakajima M."/>
            <person name="Narusaka M."/>
            <person name="Seki M."/>
            <person name="Sakurai T."/>
            <person name="Satou M."/>
            <person name="Tamse R."/>
            <person name="Vaysberg M."/>
            <person name="Wallender E.K."/>
            <person name="Wong C."/>
            <person name="Yamamura Y."/>
            <person name="Yuan S."/>
            <person name="Shinozaki K."/>
            <person name="Davis R.W."/>
            <person name="Theologis A."/>
            <person name="Ecker J.R."/>
        </authorList>
    </citation>
    <scope>NUCLEOTIDE SEQUENCE [LARGE SCALE MRNA]</scope>
    <source>
        <strain>cv. Columbia</strain>
    </source>
</reference>
<keyword id="KW-0007">Acetylation</keyword>
<keyword id="KW-0067">ATP-binding</keyword>
<keyword id="KW-0106">Calcium</keyword>
<keyword id="KW-0109">Calcium transport</keyword>
<keyword id="KW-0112">Calmodulin-binding</keyword>
<keyword id="KW-0406">Ion transport</keyword>
<keyword id="KW-0460">Magnesium</keyword>
<keyword id="KW-0472">Membrane</keyword>
<keyword id="KW-0479">Metal-binding</keyword>
<keyword id="KW-0547">Nucleotide-binding</keyword>
<keyword id="KW-0597">Phosphoprotein</keyword>
<keyword id="KW-1185">Reference proteome</keyword>
<keyword id="KW-1278">Translocase</keyword>
<keyword id="KW-0812">Transmembrane</keyword>
<keyword id="KW-1133">Transmembrane helix</keyword>
<keyword id="KW-0813">Transport</keyword>
<feature type="chain" id="PRO_0000046418" description="Calcium-transporting ATPase 12, plasma membrane-type">
    <location>
        <begin position="1"/>
        <end position="1033"/>
    </location>
</feature>
<feature type="topological domain" description="Cytoplasmic" evidence="3">
    <location>
        <begin position="1"/>
        <end position="152"/>
    </location>
</feature>
<feature type="transmembrane region" description="Helical" evidence="3">
    <location>
        <begin position="153"/>
        <end position="173"/>
    </location>
</feature>
<feature type="topological domain" description="Lumenal" evidence="3">
    <location>
        <begin position="174"/>
        <end position="191"/>
    </location>
</feature>
<feature type="transmembrane region" description="Helical" evidence="3">
    <location>
        <begin position="192"/>
        <end position="212"/>
    </location>
</feature>
<feature type="topological domain" description="Cytoplasmic" evidence="3">
    <location>
        <begin position="213"/>
        <end position="341"/>
    </location>
</feature>
<feature type="transmembrane region" description="Helical" evidence="3">
    <location>
        <begin position="342"/>
        <end position="361"/>
    </location>
</feature>
<feature type="topological domain" description="Lumenal" evidence="3">
    <location>
        <begin position="362"/>
        <end position="397"/>
    </location>
</feature>
<feature type="transmembrane region" description="Helical" evidence="3">
    <location>
        <begin position="398"/>
        <end position="415"/>
    </location>
</feature>
<feature type="topological domain" description="Cytoplasmic" evidence="3">
    <location>
        <begin position="416"/>
        <end position="806"/>
    </location>
</feature>
<feature type="transmembrane region" description="Helical" evidence="3">
    <location>
        <begin position="807"/>
        <end position="825"/>
    </location>
</feature>
<feature type="topological domain" description="Lumenal" evidence="3">
    <location>
        <begin position="826"/>
        <end position="836"/>
    </location>
</feature>
<feature type="transmembrane region" description="Helical" evidence="3">
    <location>
        <begin position="837"/>
        <end position="857"/>
    </location>
</feature>
<feature type="topological domain" description="Cytoplasmic" evidence="3">
    <location>
        <begin position="858"/>
        <end position="877"/>
    </location>
</feature>
<feature type="transmembrane region" description="Helical" evidence="3">
    <location>
        <begin position="878"/>
        <end position="900"/>
    </location>
</feature>
<feature type="topological domain" description="Lumenal" evidence="3">
    <location>
        <begin position="901"/>
        <end position="909"/>
    </location>
</feature>
<feature type="transmembrane region" description="Helical" evidence="3">
    <location>
        <begin position="910"/>
        <end position="930"/>
    </location>
</feature>
<feature type="topological domain" description="Cytoplasmic" evidence="3">
    <location>
        <begin position="931"/>
        <end position="948"/>
    </location>
</feature>
<feature type="transmembrane region" description="Helical" evidence="3">
    <location>
        <begin position="949"/>
        <end position="970"/>
    </location>
</feature>
<feature type="topological domain" description="Lumenal" evidence="3">
    <location>
        <begin position="971"/>
        <end position="980"/>
    </location>
</feature>
<feature type="transmembrane region" description="Helical" evidence="3">
    <location>
        <begin position="981"/>
        <end position="1002"/>
    </location>
</feature>
<feature type="topological domain" description="Cytoplasmic" evidence="3">
    <location>
        <begin position="1003"/>
        <end position="1006"/>
    </location>
</feature>
<feature type="region of interest" description="Interaction with calmodulin" evidence="4">
    <location>
        <begin position="25"/>
        <end position="36"/>
    </location>
</feature>
<feature type="active site" description="4-aspartylphosphate intermediate" evidence="1">
    <location>
        <position position="453"/>
    </location>
</feature>
<feature type="binding site" evidence="1">
    <location>
        <position position="751"/>
    </location>
    <ligand>
        <name>Mg(2+)</name>
        <dbReference type="ChEBI" id="CHEBI:18420"/>
    </ligand>
</feature>
<feature type="binding site" evidence="1">
    <location>
        <position position="755"/>
    </location>
    <ligand>
        <name>Mg(2+)</name>
        <dbReference type="ChEBI" id="CHEBI:18420"/>
    </ligand>
</feature>
<feature type="modified residue" description="N-acetylmethionine" evidence="2">
    <location>
        <position position="1"/>
    </location>
</feature>
<feature type="modified residue" description="Phosphoserine" evidence="2">
    <location>
        <position position="37"/>
    </location>
</feature>
<feature type="sequence conflict" description="In Ref. 3; BAC41935 and 4; AAO64912." evidence="4" ref="3 4">
    <original>Q</original>
    <variation>R</variation>
    <location>
        <position position="239"/>
    </location>
</feature>
<protein>
    <recommendedName>
        <fullName>Calcium-transporting ATPase 12, plasma membrane-type</fullName>
        <ecNumber>7.2.2.10</ecNumber>
    </recommendedName>
    <alternativeName>
        <fullName>Ca(2+)-ATPase isoform 12</fullName>
    </alternativeName>
</protein>
<sequence length="1033" mass="113707">MRDLKEYDYSALLLNLTTSSLNKAQRRWRFAYAAIYSMRAMLSLVKEIVPARIDPKTSDASLSLSYTALESGEGAKINSMPLSYVPAIDQEQLVEIMKGKDLPGIQALGGVEGVAASLRTNPTKGIHGNEQEVSRRRDLFGSNTYHKPPPKGLLFFVYEAFKDLTILILLVCAIFSLGFGIKEHGIKEGWYEGGSIFVAVFLVIVVSALSNFRQERQFDKLSKISNNIKVEVLRDSRRQHISIFDVVVGDVVFLKIGDQIPADGLFLEGHSLQVDESSMTGESDHLEVDHKDNPFLFSGTKIVDGFAQMLVVSVGMSTTWGQTMSSINQDSSERTPLQVRLDTLTSTIGKIGLTVAALVLVVLLVRYFTGNTEKEGKREYNGSKTPVDTVVNSVVRIVAAAVTIVVVAIPEGLPLAVTLTLAYSMKRMMSDQAMVRKLSACETMGSATVICTDKTGTLTLNEMKVTKFWLGQESIHEDSTKMISPDVLDLLYQGTGLNTTGSVCVSDSGSTPEFSGSPTEKALLSWTVLNLGMDMESVKQKHEVLRVETFSSAKKRSGVLVRRKSDNTVHVHWKGAAEMVLAMCSHYYTSTGSVDLMDSTAKSRIQAIIQGMAASSLRCIAFAHKIASNDSVLEEDGLTLMGIVGLKDPCRPGVSKAVETCKLAGVTIKMITGDNVFTAKAIAFECGILDHNDKDEEDAVVEGVQFRNYTDEERMQKVDKIRVMARSSPSDKLLMVKCLRLKGHVVAVTGDGTNDAPALKEADIGLSMGIQGTEVAKESSDIVILDDNFASVATVLKWGRCVYNNIQKFIQFQLTVNVAALVINFIAAISAGEVPLTAVQLLWVNLIMDTLGALALATERPTNELLKRKPVGRTEALITNVMWRNLLVQSLYQIAVLLILQFKGMSIFSVRKEVKDTLIFNTFVLCQVFNEFNAREMEKKNVFKGLHRNRLFIGIIAITIVLQVIMVEFLKKFADTVRLNGWQWGTCIALASLSWPIGFFTKFIPVSETPFLSYFKNPRSLFKGSRSPSLKKP</sequence>
<proteinExistence type="evidence at transcript level"/>
<comment type="function">
    <text evidence="1">This magnesium-dependent enzyme catalyzes the hydrolysis of ATP coupled with the translocation of calcium from the cytosol out of the cell or into organelles.</text>
</comment>
<comment type="catalytic activity">
    <reaction>
        <text>Ca(2+)(in) + ATP + H2O = Ca(2+)(out) + ADP + phosphate + H(+)</text>
        <dbReference type="Rhea" id="RHEA:18105"/>
        <dbReference type="ChEBI" id="CHEBI:15377"/>
        <dbReference type="ChEBI" id="CHEBI:15378"/>
        <dbReference type="ChEBI" id="CHEBI:29108"/>
        <dbReference type="ChEBI" id="CHEBI:30616"/>
        <dbReference type="ChEBI" id="CHEBI:43474"/>
        <dbReference type="ChEBI" id="CHEBI:456216"/>
        <dbReference type="EC" id="7.2.2.10"/>
    </reaction>
</comment>
<comment type="activity regulation">
    <text evidence="1">Activated by calmodulin.</text>
</comment>
<comment type="subcellular location">
    <subcellularLocation>
        <location>Membrane</location>
        <topology>Multi-pass membrane protein</topology>
    </subcellularLocation>
</comment>
<comment type="domain">
    <text evidence="1">The N-terminus contains an autoinhibitory calmodulin-binding domain, which binds calmodulin in a calcium-dependent fashion.</text>
</comment>
<comment type="similarity">
    <text evidence="4">Belongs to the cation transport ATPase (P-type) (TC 3.A.3) family. Type IIB subfamily.</text>
</comment>
<organism>
    <name type="scientific">Arabidopsis thaliana</name>
    <name type="common">Mouse-ear cress</name>
    <dbReference type="NCBI Taxonomy" id="3702"/>
    <lineage>
        <taxon>Eukaryota</taxon>
        <taxon>Viridiplantae</taxon>
        <taxon>Streptophyta</taxon>
        <taxon>Embryophyta</taxon>
        <taxon>Tracheophyta</taxon>
        <taxon>Spermatophyta</taxon>
        <taxon>Magnoliopsida</taxon>
        <taxon>eudicotyledons</taxon>
        <taxon>Gunneridae</taxon>
        <taxon>Pentapetalae</taxon>
        <taxon>rosids</taxon>
        <taxon>malvids</taxon>
        <taxon>Brassicales</taxon>
        <taxon>Brassicaceae</taxon>
        <taxon>Camelineae</taxon>
        <taxon>Arabidopsis</taxon>
    </lineage>
</organism>
<evidence type="ECO:0000250" key="1"/>
<evidence type="ECO:0000250" key="2">
    <source>
        <dbReference type="UniProtKB" id="O81108"/>
    </source>
</evidence>
<evidence type="ECO:0000255" key="3"/>
<evidence type="ECO:0000305" key="4"/>
<dbReference type="EC" id="7.2.2.10"/>
<dbReference type="EMBL" id="AL163818">
    <property type="protein sequence ID" value="CAB87791.1"/>
    <property type="molecule type" value="Genomic_DNA"/>
</dbReference>
<dbReference type="EMBL" id="CP002686">
    <property type="protein sequence ID" value="AEE80473.1"/>
    <property type="molecule type" value="Genomic_DNA"/>
</dbReference>
<dbReference type="EMBL" id="AK117260">
    <property type="protein sequence ID" value="BAC41935.1"/>
    <property type="molecule type" value="mRNA"/>
</dbReference>
<dbReference type="EMBL" id="BT005977">
    <property type="protein sequence ID" value="AAO64912.1"/>
    <property type="molecule type" value="mRNA"/>
</dbReference>
<dbReference type="PIR" id="T49179">
    <property type="entry name" value="T49179"/>
</dbReference>
<dbReference type="RefSeq" id="NP_191897.1">
    <property type="nucleotide sequence ID" value="NM_116203.3"/>
</dbReference>
<dbReference type="SMR" id="Q9LY77"/>
<dbReference type="BioGRID" id="10827">
    <property type="interactions" value="19"/>
</dbReference>
<dbReference type="FunCoup" id="Q9LY77">
    <property type="interactions" value="1808"/>
</dbReference>
<dbReference type="IntAct" id="Q9LY77">
    <property type="interactions" value="16"/>
</dbReference>
<dbReference type="STRING" id="3702.Q9LY77"/>
<dbReference type="TCDB" id="3.A.3.2.42">
    <property type="family name" value="the p-type atpase (p-atpase) superfamily"/>
</dbReference>
<dbReference type="PaxDb" id="3702-AT3G63380.1"/>
<dbReference type="ProteomicsDB" id="244340"/>
<dbReference type="EnsemblPlants" id="AT3G63380.1">
    <property type="protein sequence ID" value="AT3G63380.1"/>
    <property type="gene ID" value="AT3G63380"/>
</dbReference>
<dbReference type="GeneID" id="825513"/>
<dbReference type="Gramene" id="AT3G63380.1">
    <property type="protein sequence ID" value="AT3G63380.1"/>
    <property type="gene ID" value="AT3G63380"/>
</dbReference>
<dbReference type="KEGG" id="ath:AT3G63380"/>
<dbReference type="Araport" id="AT3G63380"/>
<dbReference type="TAIR" id="AT3G63380">
    <property type="gene designation" value="ACA12"/>
</dbReference>
<dbReference type="eggNOG" id="KOG0204">
    <property type="taxonomic scope" value="Eukaryota"/>
</dbReference>
<dbReference type="HOGENOM" id="CLU_002360_9_3_1"/>
<dbReference type="InParanoid" id="Q9LY77"/>
<dbReference type="OMA" id="CFVLWFG"/>
<dbReference type="OrthoDB" id="3352408at2759"/>
<dbReference type="PhylomeDB" id="Q9LY77"/>
<dbReference type="BioCyc" id="ARA:AT3G63380-MONOMER"/>
<dbReference type="PRO" id="PR:Q9LY77"/>
<dbReference type="Proteomes" id="UP000006548">
    <property type="component" value="Chromosome 3"/>
</dbReference>
<dbReference type="ExpressionAtlas" id="Q9LY77">
    <property type="expression patterns" value="baseline and differential"/>
</dbReference>
<dbReference type="GO" id="GO:0016020">
    <property type="term" value="C:membrane"/>
    <property type="evidence" value="ECO:0007669"/>
    <property type="project" value="UniProtKB-SubCell"/>
</dbReference>
<dbReference type="GO" id="GO:0005524">
    <property type="term" value="F:ATP binding"/>
    <property type="evidence" value="ECO:0007669"/>
    <property type="project" value="UniProtKB-KW"/>
</dbReference>
<dbReference type="GO" id="GO:0016887">
    <property type="term" value="F:ATP hydrolysis activity"/>
    <property type="evidence" value="ECO:0007669"/>
    <property type="project" value="InterPro"/>
</dbReference>
<dbReference type="GO" id="GO:0005516">
    <property type="term" value="F:calmodulin binding"/>
    <property type="evidence" value="ECO:0007669"/>
    <property type="project" value="UniProtKB-KW"/>
</dbReference>
<dbReference type="GO" id="GO:0046872">
    <property type="term" value="F:metal ion binding"/>
    <property type="evidence" value="ECO:0007669"/>
    <property type="project" value="UniProtKB-KW"/>
</dbReference>
<dbReference type="GO" id="GO:0005388">
    <property type="term" value="F:P-type calcium transporter activity"/>
    <property type="evidence" value="ECO:0000250"/>
    <property type="project" value="TAIR"/>
</dbReference>
<dbReference type="CDD" id="cd02081">
    <property type="entry name" value="P-type_ATPase_Ca_PMCA-like"/>
    <property type="match status" value="1"/>
</dbReference>
<dbReference type="FunFam" id="1.20.1110.10:FF:000039">
    <property type="entry name" value="Calcium-transporting ATPase"/>
    <property type="match status" value="1"/>
</dbReference>
<dbReference type="FunFam" id="2.70.150.10:FF:000006">
    <property type="entry name" value="Calcium-transporting ATPase"/>
    <property type="match status" value="1"/>
</dbReference>
<dbReference type="FunFam" id="3.40.1110.10:FF:000013">
    <property type="entry name" value="Calcium-transporting ATPase"/>
    <property type="match status" value="1"/>
</dbReference>
<dbReference type="FunFam" id="3.40.50.1000:FF:000018">
    <property type="entry name" value="Calcium-transporting ATPase"/>
    <property type="match status" value="1"/>
</dbReference>
<dbReference type="Gene3D" id="3.40.1110.10">
    <property type="entry name" value="Calcium-transporting ATPase, cytoplasmic domain N"/>
    <property type="match status" value="1"/>
</dbReference>
<dbReference type="Gene3D" id="2.70.150.10">
    <property type="entry name" value="Calcium-transporting ATPase, cytoplasmic transduction domain A"/>
    <property type="match status" value="1"/>
</dbReference>
<dbReference type="Gene3D" id="1.20.1110.10">
    <property type="entry name" value="Calcium-transporting ATPase, transmembrane domain"/>
    <property type="match status" value="1"/>
</dbReference>
<dbReference type="Gene3D" id="3.40.50.1000">
    <property type="entry name" value="HAD superfamily/HAD-like"/>
    <property type="match status" value="1"/>
</dbReference>
<dbReference type="InterPro" id="IPR006068">
    <property type="entry name" value="ATPase_P-typ_cation-transptr_C"/>
</dbReference>
<dbReference type="InterPro" id="IPR004014">
    <property type="entry name" value="ATPase_P-typ_cation-transptr_N"/>
</dbReference>
<dbReference type="InterPro" id="IPR023299">
    <property type="entry name" value="ATPase_P-typ_cyto_dom_N"/>
</dbReference>
<dbReference type="InterPro" id="IPR018303">
    <property type="entry name" value="ATPase_P-typ_P_site"/>
</dbReference>
<dbReference type="InterPro" id="IPR023298">
    <property type="entry name" value="ATPase_P-typ_TM_dom_sf"/>
</dbReference>
<dbReference type="InterPro" id="IPR008250">
    <property type="entry name" value="ATPase_P-typ_transduc_dom_A_sf"/>
</dbReference>
<dbReference type="InterPro" id="IPR036412">
    <property type="entry name" value="HAD-like_sf"/>
</dbReference>
<dbReference type="InterPro" id="IPR023214">
    <property type="entry name" value="HAD_sf"/>
</dbReference>
<dbReference type="InterPro" id="IPR006408">
    <property type="entry name" value="P-type_ATPase_IIB"/>
</dbReference>
<dbReference type="InterPro" id="IPR001757">
    <property type="entry name" value="P_typ_ATPase"/>
</dbReference>
<dbReference type="InterPro" id="IPR044492">
    <property type="entry name" value="P_typ_ATPase_HD_dom"/>
</dbReference>
<dbReference type="NCBIfam" id="TIGR01517">
    <property type="entry name" value="ATPase-IIB_Ca"/>
    <property type="match status" value="1"/>
</dbReference>
<dbReference type="NCBIfam" id="TIGR01494">
    <property type="entry name" value="ATPase_P-type"/>
    <property type="match status" value="3"/>
</dbReference>
<dbReference type="PANTHER" id="PTHR24093:SF455">
    <property type="entry name" value="CALCIUM-TRANSPORTING ATPASE 12, PLASMA MEMBRANE-TYPE"/>
    <property type="match status" value="1"/>
</dbReference>
<dbReference type="PANTHER" id="PTHR24093">
    <property type="entry name" value="CATION TRANSPORTING ATPASE"/>
    <property type="match status" value="1"/>
</dbReference>
<dbReference type="Pfam" id="PF13246">
    <property type="entry name" value="Cation_ATPase"/>
    <property type="match status" value="1"/>
</dbReference>
<dbReference type="Pfam" id="PF00689">
    <property type="entry name" value="Cation_ATPase_C"/>
    <property type="match status" value="1"/>
</dbReference>
<dbReference type="Pfam" id="PF00690">
    <property type="entry name" value="Cation_ATPase_N"/>
    <property type="match status" value="1"/>
</dbReference>
<dbReference type="Pfam" id="PF00122">
    <property type="entry name" value="E1-E2_ATPase"/>
    <property type="match status" value="1"/>
</dbReference>
<dbReference type="Pfam" id="PF00702">
    <property type="entry name" value="Hydrolase"/>
    <property type="match status" value="1"/>
</dbReference>
<dbReference type="PRINTS" id="PR00119">
    <property type="entry name" value="CATATPASE"/>
</dbReference>
<dbReference type="PRINTS" id="PR00120">
    <property type="entry name" value="HATPASE"/>
</dbReference>
<dbReference type="SFLD" id="SFLDG00002">
    <property type="entry name" value="C1.7:_P-type_atpase_like"/>
    <property type="match status" value="1"/>
</dbReference>
<dbReference type="SFLD" id="SFLDF00027">
    <property type="entry name" value="p-type_atpase"/>
    <property type="match status" value="1"/>
</dbReference>
<dbReference type="SMART" id="SM00831">
    <property type="entry name" value="Cation_ATPase_N"/>
    <property type="match status" value="1"/>
</dbReference>
<dbReference type="SUPFAM" id="SSF81653">
    <property type="entry name" value="Calcium ATPase, transduction domain A"/>
    <property type="match status" value="1"/>
</dbReference>
<dbReference type="SUPFAM" id="SSF81665">
    <property type="entry name" value="Calcium ATPase, transmembrane domain M"/>
    <property type="match status" value="1"/>
</dbReference>
<dbReference type="SUPFAM" id="SSF56784">
    <property type="entry name" value="HAD-like"/>
    <property type="match status" value="1"/>
</dbReference>
<dbReference type="SUPFAM" id="SSF81660">
    <property type="entry name" value="Metal cation-transporting ATPase, ATP-binding domain N"/>
    <property type="match status" value="1"/>
</dbReference>
<dbReference type="PROSITE" id="PS00154">
    <property type="entry name" value="ATPASE_E1_E2"/>
    <property type="match status" value="1"/>
</dbReference>